<protein>
    <recommendedName>
        <fullName evidence="5">PWWP domain-containing DNA repair factor 3A</fullName>
        <shortName evidence="5">PWWP3A</shortName>
    </recommendedName>
    <alternativeName>
        <fullName>Mutated melanoma-associated antigen 1</fullName>
        <shortName>MUM-1</shortName>
    </alternativeName>
    <alternativeName>
        <fullName>PWWP domain-containing protein MUM1</fullName>
    </alternativeName>
</protein>
<reference key="1">
    <citation type="submission" date="2006-09" db="EMBL/GenBank/DDBJ databases">
        <authorList>
            <consortium name="NIH - Mammalian Gene Collection (MGC) project"/>
        </authorList>
    </citation>
    <scope>NUCLEOTIDE SEQUENCE [LARGE SCALE MRNA]</scope>
    <source>
        <strain>Hereford</strain>
        <tissue>Hippocampus</tissue>
    </source>
</reference>
<evidence type="ECO:0000250" key="1"/>
<evidence type="ECO:0000250" key="2">
    <source>
        <dbReference type="UniProtKB" id="B1H224"/>
    </source>
</evidence>
<evidence type="ECO:0000250" key="3">
    <source>
        <dbReference type="UniProtKB" id="Q6DID5"/>
    </source>
</evidence>
<evidence type="ECO:0000256" key="4">
    <source>
        <dbReference type="SAM" id="MobiDB-lite"/>
    </source>
</evidence>
<evidence type="ECO:0000305" key="5"/>
<feature type="chain" id="PRO_0000295045" description="PWWP domain-containing DNA repair factor 3A">
    <location>
        <begin position="1"/>
        <end position="641"/>
    </location>
</feature>
<feature type="domain" description="PWWP">
    <location>
        <begin position="343"/>
        <end position="404"/>
    </location>
</feature>
<feature type="region of interest" description="Disordered" evidence="4">
    <location>
        <begin position="98"/>
        <end position="329"/>
    </location>
</feature>
<feature type="region of interest" description="Disordered" evidence="4">
    <location>
        <begin position="463"/>
        <end position="486"/>
    </location>
</feature>
<feature type="compositionally biased region" description="Basic and acidic residues" evidence="4">
    <location>
        <begin position="194"/>
        <end position="203"/>
    </location>
</feature>
<feature type="compositionally biased region" description="Basic and acidic residues" evidence="4">
    <location>
        <begin position="295"/>
        <end position="307"/>
    </location>
</feature>
<feature type="modified residue" description="Phosphoserine" evidence="2">
    <location>
        <position position="156"/>
    </location>
</feature>
<feature type="modified residue" description="Phosphoserine" evidence="3">
    <location>
        <position position="307"/>
    </location>
</feature>
<dbReference type="EMBL" id="BC123693">
    <property type="protein sequence ID" value="AAI23694.1"/>
    <property type="molecule type" value="mRNA"/>
</dbReference>
<dbReference type="RefSeq" id="NP_001069090.1">
    <property type="nucleotide sequence ID" value="NM_001075622.1"/>
</dbReference>
<dbReference type="RefSeq" id="XP_005209345.1">
    <property type="nucleotide sequence ID" value="XM_005209288.3"/>
</dbReference>
<dbReference type="RefSeq" id="XP_005209346.1">
    <property type="nucleotide sequence ID" value="XM_005209289.5"/>
</dbReference>
<dbReference type="SMR" id="Q08DK9"/>
<dbReference type="FunCoup" id="Q08DK9">
    <property type="interactions" value="2574"/>
</dbReference>
<dbReference type="STRING" id="9913.ENSBTAP00000009840"/>
<dbReference type="PaxDb" id="9913-ENSBTAP00000009840"/>
<dbReference type="GeneID" id="513471"/>
<dbReference type="KEGG" id="bta:513471"/>
<dbReference type="CTD" id="84939"/>
<dbReference type="VEuPathDB" id="HostDB:ENSBTAG00000030839"/>
<dbReference type="eggNOG" id="ENOG502QPRU">
    <property type="taxonomic scope" value="Eukaryota"/>
</dbReference>
<dbReference type="HOGENOM" id="CLU_388271_0_0_1"/>
<dbReference type="InParanoid" id="Q08DK9"/>
<dbReference type="OMA" id="PPWAHRC"/>
<dbReference type="OrthoDB" id="10013064at2759"/>
<dbReference type="TreeFam" id="TF328774"/>
<dbReference type="Proteomes" id="UP000009136">
    <property type="component" value="Chromosome 7"/>
</dbReference>
<dbReference type="Bgee" id="ENSBTAG00000030839">
    <property type="expression patterns" value="Expressed in spermatid and 106 other cell types or tissues"/>
</dbReference>
<dbReference type="GO" id="GO:0005829">
    <property type="term" value="C:cytosol"/>
    <property type="evidence" value="ECO:0000318"/>
    <property type="project" value="GO_Central"/>
</dbReference>
<dbReference type="GO" id="GO:0005634">
    <property type="term" value="C:nucleus"/>
    <property type="evidence" value="ECO:0000250"/>
    <property type="project" value="UniProtKB"/>
</dbReference>
<dbReference type="GO" id="GO:0031491">
    <property type="term" value="F:nucleosome binding"/>
    <property type="evidence" value="ECO:0000250"/>
    <property type="project" value="UniProtKB"/>
</dbReference>
<dbReference type="GO" id="GO:0006325">
    <property type="term" value="P:chromatin organization"/>
    <property type="evidence" value="ECO:0000250"/>
    <property type="project" value="UniProtKB"/>
</dbReference>
<dbReference type="GO" id="GO:0006281">
    <property type="term" value="P:DNA repair"/>
    <property type="evidence" value="ECO:0000250"/>
    <property type="project" value="UniProtKB"/>
</dbReference>
<dbReference type="CDD" id="cd06080">
    <property type="entry name" value="PWWP_MUM1-like"/>
    <property type="match status" value="1"/>
</dbReference>
<dbReference type="FunFam" id="2.30.30.140:FF:000063">
    <property type="entry name" value="PWWP domain-containing DNA repair factor 3A"/>
    <property type="match status" value="1"/>
</dbReference>
<dbReference type="Gene3D" id="2.30.30.140">
    <property type="match status" value="1"/>
</dbReference>
<dbReference type="Gene3D" id="6.10.300.20">
    <property type="match status" value="1"/>
</dbReference>
<dbReference type="InterPro" id="IPR035504">
    <property type="entry name" value="MUM1-like_PWWP"/>
</dbReference>
<dbReference type="InterPro" id="IPR040263">
    <property type="entry name" value="PWP3A_3B_4"/>
</dbReference>
<dbReference type="InterPro" id="IPR048795">
    <property type="entry name" value="PWP3A_3B_4_C"/>
</dbReference>
<dbReference type="InterPro" id="IPR048765">
    <property type="entry name" value="PWP3A_3B_4_N"/>
</dbReference>
<dbReference type="PANTHER" id="PTHR31333">
    <property type="entry name" value="PWWP DOMAIN-CONTAINING DNA REPAIR FACTOR 3 FAMILY MEMBER"/>
    <property type="match status" value="1"/>
</dbReference>
<dbReference type="PANTHER" id="PTHR31333:SF4">
    <property type="entry name" value="PWWP DOMAIN-CONTAINING DNA REPAIR FACTOR 3A"/>
    <property type="match status" value="1"/>
</dbReference>
<dbReference type="Pfam" id="PF20884">
    <property type="entry name" value="MUM1-like_PWWP"/>
    <property type="match status" value="1"/>
</dbReference>
<dbReference type="Pfam" id="PF20886">
    <property type="entry name" value="PWP3A-B_C"/>
    <property type="match status" value="1"/>
</dbReference>
<dbReference type="Pfam" id="PF20887">
    <property type="entry name" value="PWP3A-B_N"/>
    <property type="match status" value="1"/>
</dbReference>
<dbReference type="SUPFAM" id="SSF63748">
    <property type="entry name" value="Tudor/PWWP/MBT"/>
    <property type="match status" value="1"/>
</dbReference>
<keyword id="KW-0227">DNA damage</keyword>
<keyword id="KW-0234">DNA repair</keyword>
<keyword id="KW-0539">Nucleus</keyword>
<keyword id="KW-0597">Phosphoprotein</keyword>
<keyword id="KW-1185">Reference proteome</keyword>
<sequence length="641" mass="71109">MTDAKYVLCRWKKRLWPAKVLAGTEKSAKNKRKKGYFLNVQILSLDKKIKVKSAEAKVLRKVHIEDIASSLASQDGTPAAPLEELTYRRSLRVALDVLNERQGSSSREGTTPRPPRVKPMEPASWPPKPSLSPSFLEDTAGSPGPTRRERMSQRLSGLPAGEEDLEYGVDHKEGLKRSGGLDAPAMCSASGGAQDREASRKQQADWMTPLGKQGRNPAQGPHSGQRVAPSSEGAGQEDGETGAGPAALCSPPGGRDLSPLDGCPAEHLGLDSGQRPRAHMSPHSPAQLGPAEEAADTRPLEEARPLSEEFMEPSAVNSLLEEDEDDEEPPRILLYHEPRSFEVGMLVWHKYQKYPFWPAVVKSVRRRDKKASVLFIEGNMNPRGRGISVLLRRLKHFDCKEKQALLDEAKEDFAQAIGWCVSLITDYRVRLGCGSFAGSFLEYYAADISSPVRKSIQQDVQGTRFPQLSGGDPEEPVAGSPQGRRPAYRKVLPDRSRAARDRANQKLVEYIVKARGAESHLRAILRNRKPSRWLKTFLSSGQYMTCVETYLEDEEQLDLVVKYLQGVYKQAGCQLLARGHGDGIRFILDVLLPEAIICAISAVDAVDYKTAEEKYIRGPALSSREKEIFDNQLLEERNRRC</sequence>
<name>PWP3A_BOVIN</name>
<accession>Q08DK9</accession>
<comment type="function">
    <text evidence="1">Involved in the DNA damage response pathway by contributing to the maintenance of chromatin architecture. Recruited to the vicinity of DNA breaks by TP53BP1 and plays an accessory role to facilitate damage-induced chromatin changes and promoting chromatin relaxation. Required for efficient DNA repair and cell survival following DNA damage (By similarity).</text>
</comment>
<comment type="subunit">
    <text evidence="1">Interacts with TP53BP1 (via BRCT domain); the interaction is not dependent on its phosphorylation status. Binds nucleosomes. Interacts with trimethylated 'Lys-36' of histone H3 (H3K36me3) (in vitro) (By similarity).</text>
</comment>
<comment type="subcellular location">
    <subcellularLocation>
        <location evidence="1">Nucleus</location>
    </subcellularLocation>
    <text evidence="1">Recruited to DNA damage sites via its interaction with the BRCT domain of TP53BP1.</text>
</comment>
<comment type="domain">
    <text>The PWWP domain mediates the interaction with nucleosomes.</text>
</comment>
<comment type="similarity">
    <text evidence="5">Belongs to the PWWP3A family.</text>
</comment>
<proteinExistence type="evidence at transcript level"/>
<gene>
    <name type="primary">PWWP3A</name>
    <name type="synonym">MUM1</name>
</gene>
<organism>
    <name type="scientific">Bos taurus</name>
    <name type="common">Bovine</name>
    <dbReference type="NCBI Taxonomy" id="9913"/>
    <lineage>
        <taxon>Eukaryota</taxon>
        <taxon>Metazoa</taxon>
        <taxon>Chordata</taxon>
        <taxon>Craniata</taxon>
        <taxon>Vertebrata</taxon>
        <taxon>Euteleostomi</taxon>
        <taxon>Mammalia</taxon>
        <taxon>Eutheria</taxon>
        <taxon>Laurasiatheria</taxon>
        <taxon>Artiodactyla</taxon>
        <taxon>Ruminantia</taxon>
        <taxon>Pecora</taxon>
        <taxon>Bovidae</taxon>
        <taxon>Bovinae</taxon>
        <taxon>Bos</taxon>
    </lineage>
</organism>